<gene>
    <name evidence="1" type="primary">prf1</name>
    <name type="ordered locus">TSIB_1927</name>
</gene>
<sequence>MSHKSAEMYELKKKVEELKKIRGRATELVSLYIPADYDLNKVMQQLREEYGTAQNIKSKTTRKNVLGALERAMQHLKLYRQTPETGLALFVGNVSEQEGVSDIRVFAIVPPEPLNVRLYRCDQTFVTEPLEEMLRVKDAYGLITVEKNEATIGILRGKKIEVIEDLTSNVPGKTRAGGQSARRYERIREQEAHEFMKRIGEHASSVFLPLLEKDELKGIIIGGPGPTKEEFVEGEYLHHELRKRILGVVDISYHGEYGLRELVEKASDILREHEAVKERKLVQQFFKHLVKDTGLITYGEKEVRKALELGAVDILLLSEGYDRVRVKALCNNCGWEELKTMTEAEFELYKKNLKACPKCNSQNISVEKWDVAEELIKIAEEGGAEVEIISLDTEEGQQFYKAFGGIAAILRYKLQ</sequence>
<evidence type="ECO:0000255" key="1">
    <source>
        <dbReference type="HAMAP-Rule" id="MF_00424"/>
    </source>
</evidence>
<dbReference type="EMBL" id="CP001463">
    <property type="protein sequence ID" value="ACS90976.1"/>
    <property type="molecule type" value="Genomic_DNA"/>
</dbReference>
<dbReference type="RefSeq" id="WP_015850192.1">
    <property type="nucleotide sequence ID" value="NC_012883.1"/>
</dbReference>
<dbReference type="SMR" id="C5ZZZ5"/>
<dbReference type="STRING" id="604354.TSIB_1927"/>
<dbReference type="GeneID" id="8096939"/>
<dbReference type="KEGG" id="tsi:TSIB_1927"/>
<dbReference type="eggNOG" id="arCOG01742">
    <property type="taxonomic scope" value="Archaea"/>
</dbReference>
<dbReference type="HOGENOM" id="CLU_035759_3_0_2"/>
<dbReference type="OrthoDB" id="1011at2157"/>
<dbReference type="Proteomes" id="UP000009079">
    <property type="component" value="Chromosome"/>
</dbReference>
<dbReference type="GO" id="GO:0005737">
    <property type="term" value="C:cytoplasm"/>
    <property type="evidence" value="ECO:0007669"/>
    <property type="project" value="UniProtKB-SubCell"/>
</dbReference>
<dbReference type="GO" id="GO:0016149">
    <property type="term" value="F:translation release factor activity, codon specific"/>
    <property type="evidence" value="ECO:0007669"/>
    <property type="project" value="UniProtKB-UniRule"/>
</dbReference>
<dbReference type="FunFam" id="3.30.1330.30:FF:000032">
    <property type="entry name" value="Eukaryotic peptide chain release factor subunit 1"/>
    <property type="match status" value="1"/>
</dbReference>
<dbReference type="FunFam" id="3.30.420.60:FF:000003">
    <property type="entry name" value="Peptide chain release factor subunit 1"/>
    <property type="match status" value="1"/>
</dbReference>
<dbReference type="FunFam" id="3.30.960.10:FF:000003">
    <property type="entry name" value="Peptide chain release factor subunit 1"/>
    <property type="match status" value="1"/>
</dbReference>
<dbReference type="Gene3D" id="3.30.1330.30">
    <property type="match status" value="1"/>
</dbReference>
<dbReference type="Gene3D" id="3.30.960.10">
    <property type="entry name" value="eRF1 domain 1"/>
    <property type="match status" value="1"/>
</dbReference>
<dbReference type="Gene3D" id="3.30.420.60">
    <property type="entry name" value="eRF1 domain 2"/>
    <property type="match status" value="1"/>
</dbReference>
<dbReference type="HAMAP" id="MF_00424">
    <property type="entry name" value="Rel_fact_arch_1"/>
    <property type="match status" value="1"/>
</dbReference>
<dbReference type="InterPro" id="IPR042226">
    <property type="entry name" value="eFR1_2_sf"/>
</dbReference>
<dbReference type="InterPro" id="IPR005140">
    <property type="entry name" value="eRF1_1_Pelota"/>
</dbReference>
<dbReference type="InterPro" id="IPR024049">
    <property type="entry name" value="eRF1_1_sf"/>
</dbReference>
<dbReference type="InterPro" id="IPR005141">
    <property type="entry name" value="eRF1_2"/>
</dbReference>
<dbReference type="InterPro" id="IPR005142">
    <property type="entry name" value="eRF1_3"/>
</dbReference>
<dbReference type="InterPro" id="IPR020918">
    <property type="entry name" value="Peptide_chain-rel_aRF1"/>
</dbReference>
<dbReference type="InterPro" id="IPR004403">
    <property type="entry name" value="Peptide_chain-rel_eRF1/aRF1"/>
</dbReference>
<dbReference type="InterPro" id="IPR029064">
    <property type="entry name" value="Ribosomal_eL30-like_sf"/>
</dbReference>
<dbReference type="NCBIfam" id="TIGR03676">
    <property type="entry name" value="aRF1_eRF1"/>
    <property type="match status" value="1"/>
</dbReference>
<dbReference type="PANTHER" id="PTHR10113">
    <property type="entry name" value="PEPTIDE CHAIN RELEASE FACTOR SUBUNIT 1"/>
    <property type="match status" value="1"/>
</dbReference>
<dbReference type="Pfam" id="PF03463">
    <property type="entry name" value="eRF1_1"/>
    <property type="match status" value="1"/>
</dbReference>
<dbReference type="Pfam" id="PF03464">
    <property type="entry name" value="eRF1_2"/>
    <property type="match status" value="1"/>
</dbReference>
<dbReference type="Pfam" id="PF03465">
    <property type="entry name" value="eRF1_3"/>
    <property type="match status" value="1"/>
</dbReference>
<dbReference type="SMART" id="SM01194">
    <property type="entry name" value="eRF1_1"/>
    <property type="match status" value="1"/>
</dbReference>
<dbReference type="SUPFAM" id="SSF55315">
    <property type="entry name" value="L30e-like"/>
    <property type="match status" value="1"/>
</dbReference>
<dbReference type="SUPFAM" id="SSF55481">
    <property type="entry name" value="N-terminal domain of eukaryotic peptide chain release factor subunit 1, ERF1"/>
    <property type="match status" value="1"/>
</dbReference>
<dbReference type="SUPFAM" id="SSF53137">
    <property type="entry name" value="Translational machinery components"/>
    <property type="match status" value="1"/>
</dbReference>
<comment type="function">
    <text evidence="1">Directs the termination of nascent peptide synthesis (translation) in response to the termination codons UAA, UAG and UGA.</text>
</comment>
<comment type="subunit">
    <text evidence="1">Heterodimer of two subunits, one of which binds GTP.</text>
</comment>
<comment type="subcellular location">
    <subcellularLocation>
        <location evidence="1">Cytoplasm</location>
    </subcellularLocation>
</comment>
<comment type="similarity">
    <text evidence="1">Belongs to the eukaryotic release factor 1 family.</text>
</comment>
<reference key="1">
    <citation type="journal article" date="2009" name="Appl. Environ. Microbiol.">
        <title>Metabolic versatility and indigenous origin of the archaeon Thermococcus sibiricus, isolated from a siberian oil reservoir, as revealed by genome analysis.</title>
        <authorList>
            <person name="Mardanov A.V."/>
            <person name="Ravin N.V."/>
            <person name="Svetlitchnyi V.A."/>
            <person name="Beletsky A.V."/>
            <person name="Miroshnichenko M.L."/>
            <person name="Bonch-Osmolovskaya E.A."/>
            <person name="Skryabin K.G."/>
        </authorList>
    </citation>
    <scope>NUCLEOTIDE SEQUENCE [LARGE SCALE GENOMIC DNA]</scope>
    <source>
        <strain>DSM 12597 / MM 739</strain>
    </source>
</reference>
<feature type="chain" id="PRO_1000206060" description="Peptide chain release factor subunit 1">
    <location>
        <begin position="1"/>
        <end position="415"/>
    </location>
</feature>
<protein>
    <recommendedName>
        <fullName evidence="1">Peptide chain release factor subunit 1</fullName>
    </recommendedName>
    <alternativeName>
        <fullName evidence="1">Translation termination factor aRF1</fullName>
    </alternativeName>
</protein>
<proteinExistence type="inferred from homology"/>
<keyword id="KW-0963">Cytoplasm</keyword>
<keyword id="KW-0648">Protein biosynthesis</keyword>
<keyword id="KW-1185">Reference proteome</keyword>
<name>RF1_THESM</name>
<accession>C5ZZZ5</accession>
<organism>
    <name type="scientific">Thermococcus sibiricus (strain DSM 12597 / MM 739)</name>
    <dbReference type="NCBI Taxonomy" id="604354"/>
    <lineage>
        <taxon>Archaea</taxon>
        <taxon>Methanobacteriati</taxon>
        <taxon>Methanobacteriota</taxon>
        <taxon>Thermococci</taxon>
        <taxon>Thermococcales</taxon>
        <taxon>Thermococcaceae</taxon>
        <taxon>Thermococcus</taxon>
    </lineage>
</organism>